<evidence type="ECO:0000255" key="1">
    <source>
        <dbReference type="HAMAP-Rule" id="MF_01114"/>
    </source>
</evidence>
<dbReference type="EMBL" id="CP000964">
    <property type="protein sequence ID" value="ACI07358.1"/>
    <property type="molecule type" value="Genomic_DNA"/>
</dbReference>
<dbReference type="SMR" id="B5XVB7"/>
<dbReference type="KEGG" id="kpe:KPK_1097"/>
<dbReference type="HOGENOM" id="CLU_066607_3_2_6"/>
<dbReference type="Proteomes" id="UP000001734">
    <property type="component" value="Chromosome"/>
</dbReference>
<dbReference type="GO" id="GO:0005737">
    <property type="term" value="C:cytoplasm"/>
    <property type="evidence" value="ECO:0007669"/>
    <property type="project" value="UniProtKB-SubCell"/>
</dbReference>
<dbReference type="GO" id="GO:0006282">
    <property type="term" value="P:regulation of DNA repair"/>
    <property type="evidence" value="ECO:0007669"/>
    <property type="project" value="UniProtKB-UniRule"/>
</dbReference>
<dbReference type="FunFam" id="1.10.10.10:FF:000134">
    <property type="entry name" value="Regulatory protein RecX"/>
    <property type="match status" value="1"/>
</dbReference>
<dbReference type="Gene3D" id="1.10.10.10">
    <property type="entry name" value="Winged helix-like DNA-binding domain superfamily/Winged helix DNA-binding domain"/>
    <property type="match status" value="3"/>
</dbReference>
<dbReference type="HAMAP" id="MF_01114">
    <property type="entry name" value="RecX"/>
    <property type="match status" value="1"/>
</dbReference>
<dbReference type="InterPro" id="IPR053926">
    <property type="entry name" value="RecX_HTH_1st"/>
</dbReference>
<dbReference type="InterPro" id="IPR053924">
    <property type="entry name" value="RecX_HTH_2nd"/>
</dbReference>
<dbReference type="InterPro" id="IPR053925">
    <property type="entry name" value="RecX_HTH_3rd"/>
</dbReference>
<dbReference type="InterPro" id="IPR003783">
    <property type="entry name" value="Regulatory_RecX"/>
</dbReference>
<dbReference type="InterPro" id="IPR036388">
    <property type="entry name" value="WH-like_DNA-bd_sf"/>
</dbReference>
<dbReference type="NCBIfam" id="NF001052">
    <property type="entry name" value="PRK00117.1-1"/>
    <property type="match status" value="1"/>
</dbReference>
<dbReference type="PANTHER" id="PTHR33602">
    <property type="entry name" value="REGULATORY PROTEIN RECX FAMILY PROTEIN"/>
    <property type="match status" value="1"/>
</dbReference>
<dbReference type="PANTHER" id="PTHR33602:SF1">
    <property type="entry name" value="REGULATORY PROTEIN RECX FAMILY PROTEIN"/>
    <property type="match status" value="1"/>
</dbReference>
<dbReference type="Pfam" id="PF21982">
    <property type="entry name" value="RecX_HTH1"/>
    <property type="match status" value="1"/>
</dbReference>
<dbReference type="Pfam" id="PF02631">
    <property type="entry name" value="RecX_HTH2"/>
    <property type="match status" value="1"/>
</dbReference>
<dbReference type="Pfam" id="PF21981">
    <property type="entry name" value="RecX_HTH3"/>
    <property type="match status" value="1"/>
</dbReference>
<gene>
    <name evidence="1" type="primary">recX</name>
    <name type="ordered locus">KPK_1097</name>
</gene>
<keyword id="KW-0963">Cytoplasm</keyword>
<sequence>MTEPSSRRSGYARLLDRAIRILAMRDHSEQELRRKLAAPVMSKNGPEALDVTPEELEQVVAWCIENRYLDDHRFVGQFIASRSRKGYGPARIRQELSQKGIARQDVEQAMRECDIDWVSLAREQAQRKYGEPLPSAFTEKVKVQRFLLYRGYLMEDIQEIWRNFAD</sequence>
<reference key="1">
    <citation type="journal article" date="2008" name="PLoS Genet.">
        <title>Complete genome sequence of the N2-fixing broad host range endophyte Klebsiella pneumoniae 342 and virulence predictions verified in mice.</title>
        <authorList>
            <person name="Fouts D.E."/>
            <person name="Tyler H.L."/>
            <person name="DeBoy R.T."/>
            <person name="Daugherty S."/>
            <person name="Ren Q."/>
            <person name="Badger J.H."/>
            <person name="Durkin A.S."/>
            <person name="Huot H."/>
            <person name="Shrivastava S."/>
            <person name="Kothari S."/>
            <person name="Dodson R.J."/>
            <person name="Mohamoud Y."/>
            <person name="Khouri H."/>
            <person name="Roesch L.F.W."/>
            <person name="Krogfelt K.A."/>
            <person name="Struve C."/>
            <person name="Triplett E.W."/>
            <person name="Methe B.A."/>
        </authorList>
    </citation>
    <scope>NUCLEOTIDE SEQUENCE [LARGE SCALE GENOMIC DNA]</scope>
    <source>
        <strain>342</strain>
    </source>
</reference>
<protein>
    <recommendedName>
        <fullName evidence="1">Regulatory protein RecX</fullName>
    </recommendedName>
</protein>
<proteinExistence type="inferred from homology"/>
<comment type="function">
    <text evidence="1">Modulates RecA activity.</text>
</comment>
<comment type="subcellular location">
    <subcellularLocation>
        <location evidence="1">Cytoplasm</location>
    </subcellularLocation>
</comment>
<comment type="similarity">
    <text evidence="1">Belongs to the RecX family.</text>
</comment>
<name>RECX_KLEP3</name>
<accession>B5XVB7</accession>
<organism>
    <name type="scientific">Klebsiella pneumoniae (strain 342)</name>
    <dbReference type="NCBI Taxonomy" id="507522"/>
    <lineage>
        <taxon>Bacteria</taxon>
        <taxon>Pseudomonadati</taxon>
        <taxon>Pseudomonadota</taxon>
        <taxon>Gammaproteobacteria</taxon>
        <taxon>Enterobacterales</taxon>
        <taxon>Enterobacteriaceae</taxon>
        <taxon>Klebsiella/Raoultella group</taxon>
        <taxon>Klebsiella</taxon>
        <taxon>Klebsiella pneumoniae complex</taxon>
    </lineage>
</organism>
<feature type="chain" id="PRO_1000137172" description="Regulatory protein RecX">
    <location>
        <begin position="1"/>
        <end position="166"/>
    </location>
</feature>